<gene>
    <name type="primary">Kdm3a</name>
    <name type="synonym">Jhdm2a</name>
    <name type="synonym">Jmjd1a</name>
    <name type="synonym">Kiaa0742</name>
</gene>
<name>KDM3A_MOUSE</name>
<evidence type="ECO:0000250" key="1"/>
<evidence type="ECO:0000250" key="2">
    <source>
        <dbReference type="UniProtKB" id="Q9Y4C1"/>
    </source>
</evidence>
<evidence type="ECO:0000255" key="3"/>
<evidence type="ECO:0000255" key="4">
    <source>
        <dbReference type="PROSITE-ProRule" id="PRU00538"/>
    </source>
</evidence>
<evidence type="ECO:0000256" key="5">
    <source>
        <dbReference type="SAM" id="MobiDB-lite"/>
    </source>
</evidence>
<evidence type="ECO:0000269" key="6">
    <source>
    </source>
</evidence>
<evidence type="ECO:0000269" key="7">
    <source>
    </source>
</evidence>
<evidence type="ECO:0000303" key="8">
    <source>
    </source>
</evidence>
<evidence type="ECO:0000305" key="9"/>
<feature type="chain" id="PRO_0000084286" description="Lysine-specific demethylase 3A">
    <location>
        <begin position="1"/>
        <end position="1323"/>
    </location>
</feature>
<feature type="domain" description="JmjC" evidence="4">
    <location>
        <begin position="1060"/>
        <end position="1283"/>
    </location>
</feature>
<feature type="zinc finger region" description="C6-type" evidence="3">
    <location>
        <begin position="662"/>
        <end position="687"/>
    </location>
</feature>
<feature type="region of interest" description="Disordered" evidence="5">
    <location>
        <begin position="255"/>
        <end position="287"/>
    </location>
</feature>
<feature type="region of interest" description="Disordered" evidence="5">
    <location>
        <begin position="307"/>
        <end position="337"/>
    </location>
</feature>
<feature type="region of interest" description="Disordered" evidence="5">
    <location>
        <begin position="385"/>
        <end position="416"/>
    </location>
</feature>
<feature type="region of interest" description="Disordered" evidence="5">
    <location>
        <begin position="468"/>
        <end position="487"/>
    </location>
</feature>
<feature type="region of interest" description="Disordered" evidence="5">
    <location>
        <begin position="495"/>
        <end position="517"/>
    </location>
</feature>
<feature type="short sequence motif" description="LXXLL motif">
    <location>
        <begin position="885"/>
        <end position="889"/>
    </location>
</feature>
<feature type="compositionally biased region" description="Polar residues" evidence="5">
    <location>
        <begin position="266"/>
        <end position="283"/>
    </location>
</feature>
<feature type="compositionally biased region" description="Polar residues" evidence="5">
    <location>
        <begin position="307"/>
        <end position="327"/>
    </location>
</feature>
<feature type="compositionally biased region" description="Polar residues" evidence="5">
    <location>
        <begin position="477"/>
        <end position="486"/>
    </location>
</feature>
<feature type="compositionally biased region" description="Polar residues" evidence="5">
    <location>
        <begin position="495"/>
        <end position="507"/>
    </location>
</feature>
<feature type="binding site" evidence="4">
    <location>
        <position position="1122"/>
    </location>
    <ligand>
        <name>Fe cation</name>
        <dbReference type="ChEBI" id="CHEBI:24875"/>
        <note>catalytic</note>
    </ligand>
</feature>
<feature type="binding site" evidence="4">
    <location>
        <position position="1124"/>
    </location>
    <ligand>
        <name>Fe cation</name>
        <dbReference type="ChEBI" id="CHEBI:24875"/>
        <note>catalytic</note>
    </ligand>
</feature>
<feature type="binding site" evidence="4">
    <location>
        <position position="1251"/>
    </location>
    <ligand>
        <name>Fe cation</name>
        <dbReference type="ChEBI" id="CHEBI:24875"/>
        <note>catalytic</note>
    </ligand>
</feature>
<feature type="modified residue" description="Phosphoserine" evidence="2">
    <location>
        <position position="264"/>
    </location>
</feature>
<feature type="modified residue" description="Phosphoserine" evidence="2">
    <location>
        <position position="325"/>
    </location>
</feature>
<feature type="modified residue" description="Phosphoserine" evidence="2">
    <location>
        <position position="446"/>
    </location>
</feature>
<feature type="modified residue" description="N6-acetyllysine" evidence="2">
    <location>
        <position position="895"/>
    </location>
</feature>
<feature type="splice variant" id="VSP_018296" description="In isoform 2." evidence="8">
    <location>
        <begin position="1"/>
        <end position="492"/>
    </location>
</feature>
<feature type="splice variant" id="VSP_018297" description="In isoform 2." evidence="8">
    <original>NESCCTRSSNKTQTP</original>
    <variation>MFWGDWKNIMEGAPA</variation>
    <location>
        <begin position="493"/>
        <end position="507"/>
    </location>
</feature>
<feature type="sequence conflict" description="In Ref. 4; ABC54567." evidence="9" ref="4">
    <original>K</original>
    <variation>Q</variation>
    <location>
        <position position="144"/>
    </location>
</feature>
<feature type="sequence conflict" description="In Ref. 4; ABC54567." evidence="9" ref="4">
    <original>P</original>
    <variation>L</variation>
    <location>
        <position position="229"/>
    </location>
</feature>
<feature type="sequence conflict" description="In Ref. 4; ABC54567." evidence="9" ref="4">
    <original>A</original>
    <variation>T</variation>
    <location>
        <position position="618"/>
    </location>
</feature>
<feature type="sequence conflict" description="In Ref. 2; AAH31200." evidence="9" ref="2">
    <original>V</original>
    <variation>F</variation>
    <location>
        <position position="832"/>
    </location>
</feature>
<protein>
    <recommendedName>
        <fullName>Lysine-specific demethylase 3A</fullName>
        <ecNumber evidence="2">1.14.11.65</ecNumber>
    </recommendedName>
    <alternativeName>
        <fullName>JmjC domain-containing histone demethylation protein 2A</fullName>
    </alternativeName>
    <alternativeName>
        <fullName>Jumonji domain-containing protein 1A</fullName>
    </alternativeName>
    <alternativeName>
        <fullName evidence="9">[histone H3]-dimethyl-L-lysine(9) demethylase 3A</fullName>
    </alternativeName>
</protein>
<dbReference type="EC" id="1.14.11.65" evidence="2"/>
<dbReference type="EMBL" id="AK129204">
    <property type="protein sequence ID" value="BAC98014.1"/>
    <property type="status" value="ALT_INIT"/>
    <property type="molecule type" value="mRNA"/>
</dbReference>
<dbReference type="EMBL" id="BC026605">
    <property type="protein sequence ID" value="AAH26605.1"/>
    <property type="molecule type" value="mRNA"/>
</dbReference>
<dbReference type="EMBL" id="BC031158">
    <property type="protein sequence ID" value="AAH31158.1"/>
    <property type="molecule type" value="mRNA"/>
</dbReference>
<dbReference type="EMBL" id="BC031200">
    <property type="protein sequence ID" value="AAH31200.1"/>
    <property type="molecule type" value="mRNA"/>
</dbReference>
<dbReference type="EMBL" id="BC059264">
    <property type="protein sequence ID" value="AAH59264.1"/>
    <property type="molecule type" value="mRNA"/>
</dbReference>
<dbReference type="EMBL" id="AK144825">
    <property type="protein sequence ID" value="BAE26085.1"/>
    <property type="molecule type" value="mRNA"/>
</dbReference>
<dbReference type="EMBL" id="AK166797">
    <property type="protein sequence ID" value="BAE39025.1"/>
    <property type="molecule type" value="mRNA"/>
</dbReference>
<dbReference type="EMBL" id="DQ323991">
    <property type="protein sequence ID" value="ABC54567.1"/>
    <property type="molecule type" value="mRNA"/>
</dbReference>
<dbReference type="CCDS" id="CCDS20233.1">
    <molecule id="Q6PCM1-1"/>
</dbReference>
<dbReference type="RefSeq" id="NP_001033784.2">
    <molecule id="Q6PCM1-1"/>
    <property type="nucleotide sequence ID" value="NM_001038695.3"/>
</dbReference>
<dbReference type="RefSeq" id="NP_001349129.1">
    <molecule id="Q6PCM1-1"/>
    <property type="nucleotide sequence ID" value="NM_001362200.1"/>
</dbReference>
<dbReference type="RefSeq" id="NP_001349130.1">
    <molecule id="Q6PCM1-2"/>
    <property type="nucleotide sequence ID" value="NM_001362201.1"/>
</dbReference>
<dbReference type="RefSeq" id="NP_766589.1">
    <molecule id="Q6PCM1-1"/>
    <property type="nucleotide sequence ID" value="NM_173001.3"/>
</dbReference>
<dbReference type="RefSeq" id="XP_006505327.1">
    <property type="nucleotide sequence ID" value="XM_006505264.3"/>
</dbReference>
<dbReference type="SMR" id="Q6PCM1"/>
<dbReference type="BioGRID" id="222501">
    <property type="interactions" value="7"/>
</dbReference>
<dbReference type="FunCoup" id="Q6PCM1">
    <property type="interactions" value="3525"/>
</dbReference>
<dbReference type="IntAct" id="Q6PCM1">
    <property type="interactions" value="1"/>
</dbReference>
<dbReference type="STRING" id="10090.ENSMUSP00000128789"/>
<dbReference type="GlyGen" id="Q6PCM1">
    <property type="glycosylation" value="2 sites, 1 O-linked glycan (1 site)"/>
</dbReference>
<dbReference type="iPTMnet" id="Q6PCM1"/>
<dbReference type="PhosphoSitePlus" id="Q6PCM1"/>
<dbReference type="SwissPalm" id="Q6PCM1"/>
<dbReference type="PaxDb" id="10090-ENSMUSP00000128789"/>
<dbReference type="PeptideAtlas" id="Q6PCM1"/>
<dbReference type="ProteomicsDB" id="269288">
    <molecule id="Q6PCM1-1"/>
</dbReference>
<dbReference type="ProteomicsDB" id="269289">
    <molecule id="Q6PCM1-2"/>
</dbReference>
<dbReference type="Pumba" id="Q6PCM1"/>
<dbReference type="Antibodypedia" id="32101">
    <property type="antibodies" value="434 antibodies from 35 providers"/>
</dbReference>
<dbReference type="Ensembl" id="ENSMUST00000065509.11">
    <molecule id="Q6PCM1-1"/>
    <property type="protein sequence ID" value="ENSMUSP00000065716.5"/>
    <property type="gene ID" value="ENSMUSG00000053470.14"/>
</dbReference>
<dbReference type="Ensembl" id="ENSMUST00000167220.4">
    <molecule id="Q6PCM1-1"/>
    <property type="protein sequence ID" value="ENSMUSP00000128789.2"/>
    <property type="gene ID" value="ENSMUSG00000053470.14"/>
</dbReference>
<dbReference type="Ensembl" id="ENSMUST00000207023.2">
    <molecule id="Q6PCM1-1"/>
    <property type="protein sequence ID" value="ENSMUSP00000145959.2"/>
    <property type="gene ID" value="ENSMUSG00000053470.14"/>
</dbReference>
<dbReference type="GeneID" id="104263"/>
<dbReference type="KEGG" id="mmu:104263"/>
<dbReference type="UCSC" id="uc009cgy.3">
    <molecule id="Q6PCM1-1"/>
    <property type="organism name" value="mouse"/>
</dbReference>
<dbReference type="AGR" id="MGI:98847"/>
<dbReference type="CTD" id="55818"/>
<dbReference type="MGI" id="MGI:98847">
    <property type="gene designation" value="Kdm3a"/>
</dbReference>
<dbReference type="VEuPathDB" id="HostDB:ENSMUSG00000053470"/>
<dbReference type="eggNOG" id="KOG1356">
    <property type="taxonomic scope" value="Eukaryota"/>
</dbReference>
<dbReference type="GeneTree" id="ENSGT00940000160135"/>
<dbReference type="HOGENOM" id="CLU_002991_0_0_1"/>
<dbReference type="InParanoid" id="Q6PCM1"/>
<dbReference type="OMA" id="THDPPVK"/>
<dbReference type="OrthoDB" id="1667110at2759"/>
<dbReference type="PhylomeDB" id="Q6PCM1"/>
<dbReference type="TreeFam" id="TF324723"/>
<dbReference type="BRENDA" id="1.14.11.65">
    <property type="organism ID" value="3474"/>
</dbReference>
<dbReference type="BRENDA" id="1.14.11.66">
    <property type="organism ID" value="3474"/>
</dbReference>
<dbReference type="Reactome" id="R-MMU-3214842">
    <property type="pathway name" value="HDMs demethylate histones"/>
</dbReference>
<dbReference type="BioGRID-ORCS" id="104263">
    <property type="hits" value="0 hits in 84 CRISPR screens"/>
</dbReference>
<dbReference type="ChiTaRS" id="Kdm3a">
    <property type="organism name" value="mouse"/>
</dbReference>
<dbReference type="PRO" id="PR:Q6PCM1"/>
<dbReference type="Proteomes" id="UP000000589">
    <property type="component" value="Chromosome 6"/>
</dbReference>
<dbReference type="RNAct" id="Q6PCM1">
    <property type="molecule type" value="protein"/>
</dbReference>
<dbReference type="Bgee" id="ENSMUSG00000053470">
    <property type="expression patterns" value="Expressed in spermatocyte and 266 other cell types or tissues"/>
</dbReference>
<dbReference type="ExpressionAtlas" id="Q6PCM1">
    <property type="expression patterns" value="baseline and differential"/>
</dbReference>
<dbReference type="GO" id="GO:0005737">
    <property type="term" value="C:cytoplasm"/>
    <property type="evidence" value="ECO:0000314"/>
    <property type="project" value="MGI"/>
</dbReference>
<dbReference type="GO" id="GO:0001673">
    <property type="term" value="C:male germ cell nucleus"/>
    <property type="evidence" value="ECO:0000314"/>
    <property type="project" value="MGI"/>
</dbReference>
<dbReference type="GO" id="GO:0005654">
    <property type="term" value="C:nucleoplasm"/>
    <property type="evidence" value="ECO:0007669"/>
    <property type="project" value="Ensembl"/>
</dbReference>
<dbReference type="GO" id="GO:0005634">
    <property type="term" value="C:nucleus"/>
    <property type="evidence" value="ECO:0000314"/>
    <property type="project" value="MGI"/>
</dbReference>
<dbReference type="GO" id="GO:0003682">
    <property type="term" value="F:chromatin binding"/>
    <property type="evidence" value="ECO:0000314"/>
    <property type="project" value="MGI"/>
</dbReference>
<dbReference type="GO" id="GO:0032454">
    <property type="term" value="F:histone H3K9 demethylase activity"/>
    <property type="evidence" value="ECO:0000314"/>
    <property type="project" value="MGI"/>
</dbReference>
<dbReference type="GO" id="GO:0140683">
    <property type="term" value="F:histone H3K9me/H3K9me2 demethylase activity"/>
    <property type="evidence" value="ECO:0007669"/>
    <property type="project" value="UniProtKB-EC"/>
</dbReference>
<dbReference type="GO" id="GO:0005506">
    <property type="term" value="F:iron ion binding"/>
    <property type="evidence" value="ECO:0007669"/>
    <property type="project" value="Ensembl"/>
</dbReference>
<dbReference type="GO" id="GO:0050681">
    <property type="term" value="F:nuclear androgen receptor binding"/>
    <property type="evidence" value="ECO:0007669"/>
    <property type="project" value="Ensembl"/>
</dbReference>
<dbReference type="GO" id="GO:0003712">
    <property type="term" value="F:transcription coregulator activity"/>
    <property type="evidence" value="ECO:0000314"/>
    <property type="project" value="MGI"/>
</dbReference>
<dbReference type="GO" id="GO:0008270">
    <property type="term" value="F:zinc ion binding"/>
    <property type="evidence" value="ECO:0007669"/>
    <property type="project" value="UniProtKB-KW"/>
</dbReference>
<dbReference type="GO" id="GO:0030521">
    <property type="term" value="P:androgen receptor signaling pathway"/>
    <property type="evidence" value="ECO:0007669"/>
    <property type="project" value="Ensembl"/>
</dbReference>
<dbReference type="GO" id="GO:1990830">
    <property type="term" value="P:cellular response to leukemia inhibitory factor"/>
    <property type="evidence" value="ECO:0000270"/>
    <property type="project" value="MGI"/>
</dbReference>
<dbReference type="GO" id="GO:0046293">
    <property type="term" value="P:formaldehyde biosynthetic process"/>
    <property type="evidence" value="ECO:0007669"/>
    <property type="project" value="Ensembl"/>
</dbReference>
<dbReference type="GO" id="GO:0120162">
    <property type="term" value="P:positive regulation of cold-induced thermogenesis"/>
    <property type="evidence" value="ECO:0000315"/>
    <property type="project" value="YuBioLab"/>
</dbReference>
<dbReference type="GO" id="GO:0045944">
    <property type="term" value="P:positive regulation of transcription by RNA polymerase II"/>
    <property type="evidence" value="ECO:0000314"/>
    <property type="project" value="MGI"/>
</dbReference>
<dbReference type="GO" id="GO:0010468">
    <property type="term" value="P:regulation of gene expression"/>
    <property type="evidence" value="ECO:0000315"/>
    <property type="project" value="MGI"/>
</dbReference>
<dbReference type="GO" id="GO:2000736">
    <property type="term" value="P:regulation of stem cell differentiation"/>
    <property type="evidence" value="ECO:0000315"/>
    <property type="project" value="MGI"/>
</dbReference>
<dbReference type="GO" id="GO:2000036">
    <property type="term" value="P:regulation of stem cell population maintenance"/>
    <property type="evidence" value="ECO:0000316"/>
    <property type="project" value="MGI"/>
</dbReference>
<dbReference type="GO" id="GO:0007290">
    <property type="term" value="P:spermatid nucleus elongation"/>
    <property type="evidence" value="ECO:0000315"/>
    <property type="project" value="MGI"/>
</dbReference>
<dbReference type="GO" id="GO:0007283">
    <property type="term" value="P:spermatogenesis"/>
    <property type="evidence" value="ECO:0000315"/>
    <property type="project" value="MGI"/>
</dbReference>
<dbReference type="FunFam" id="2.60.120.650:FF:000004">
    <property type="entry name" value="Putative lysine-specific demethylase 3B"/>
    <property type="match status" value="1"/>
</dbReference>
<dbReference type="Gene3D" id="2.60.120.650">
    <property type="entry name" value="Cupin"/>
    <property type="match status" value="1"/>
</dbReference>
<dbReference type="InterPro" id="IPR054294">
    <property type="entry name" value="DUF7030"/>
</dbReference>
<dbReference type="InterPro" id="IPR045109">
    <property type="entry name" value="JHDM2-like"/>
</dbReference>
<dbReference type="InterPro" id="IPR003347">
    <property type="entry name" value="JmjC_dom"/>
</dbReference>
<dbReference type="InterPro" id="IPR054503">
    <property type="entry name" value="KDM3AB_Tudor"/>
</dbReference>
<dbReference type="InterPro" id="IPR054504">
    <property type="entry name" value="PWWP_KDM3B"/>
</dbReference>
<dbReference type="PANTHER" id="PTHR12549">
    <property type="entry name" value="JMJC DOMAIN-CONTAINING HISTONE DEMETHYLATION PROTEIN"/>
    <property type="match status" value="1"/>
</dbReference>
<dbReference type="PANTHER" id="PTHR12549:SF7">
    <property type="entry name" value="LYSINE-SPECIFIC DEMETHYLASE 3A"/>
    <property type="match status" value="1"/>
</dbReference>
<dbReference type="Pfam" id="PF22989">
    <property type="entry name" value="DUF7030"/>
    <property type="match status" value="1"/>
</dbReference>
<dbReference type="Pfam" id="PF02373">
    <property type="entry name" value="JmjC"/>
    <property type="match status" value="1"/>
</dbReference>
<dbReference type="Pfam" id="PF22988">
    <property type="entry name" value="PWWP_KDM3B"/>
    <property type="match status" value="1"/>
</dbReference>
<dbReference type="Pfam" id="PF22987">
    <property type="entry name" value="Tudor_KDM3B"/>
    <property type="match status" value="1"/>
</dbReference>
<dbReference type="SMART" id="SM00558">
    <property type="entry name" value="JmjC"/>
    <property type="match status" value="1"/>
</dbReference>
<dbReference type="SUPFAM" id="SSF51197">
    <property type="entry name" value="Clavaminate synthase-like"/>
    <property type="match status" value="1"/>
</dbReference>
<dbReference type="PROSITE" id="PS51184">
    <property type="entry name" value="JMJC"/>
    <property type="match status" value="1"/>
</dbReference>
<sequence>MVLTLGESWPVLVGKRFLSLSAAEGNEGGQDNWDLERVAEWPWLSGTIRAVSHTDVTKKDLKVCVEFDGESWRKRRWIDVYSLQRKAFLVEHNLVLAERKSPEVPEQVIQWPAIMYKSLLDKAGLGAITSVRFLGDQQSVFVSKDLLKPIQDVNSLRLSLTDNQTVSKEFQALIVKHLDESHLLQGDKNLVGSEVKIYSLDPSTQWFSATVVHGNPSSKTLQVNCEEIPALKIVDPALIHVEVVHDNFVTCGNSTRTGAVKRKSSENNGSSVSKQAKSCSEASPSMCPVQSVPTTVFKEILLGCTAATPSSKDPRQQNTPQAANSPPNIGAKLPQGCHKQNLPEELSSCLNTKPEVPRTKPDVCKEGLLSSKSSQVGAGDLKILSEPKGSCIQPKTNTDQESRLESAPQPVTGLPKECLPAKTSSKAELDIATTPELQKHLEHAASTSDDLSDKPEVKAGVTSLNSCAEKKVEPSHLGSQSQNLKETSVKVDNESCCTRSSNKTQTPPARKSVLTDPDKVRKLQQSGEAFVQDDSCVNIVAQLPKCRECRLDSLRKDKDQQKDSPVFCRFFHFRRLQFNKHGVLRVEGFLTPNKYDSEAIGLWLPLTKNVVGTDLDTAKYILANIGDHFCQMVISEKEAMSTIEPHRQVAWKRAVKGVREMCDVCDTTIFNLHWVCPRCGFGVCVDCYRMKRKNCQQGAAYKTFSWIRCVKSQIHEPENLMPTQIIPGKALYDVGDIVHSVRAKWGIKANCPCSNRQFKLFSKPALKEDLKQTSLSGEKPTLGTMVQQSSPVLEPVAVCGEAASKPASSVKPTCPTSTSPLNWLADLTSGNVNKENKEKQLTMPILKNEIKCLPPLPPLNKPSTVLHTFNSTILTPVSNNNSGFLRNLLNSSTAKTENGLKNTPKILDDIFASLVQNKTSSDSSKRPQGLTIKPSILGFDTPHYWLCDNRLLCLQDPNNKSNWNVFRECWKQGQPVMVSGVHHKLNTELWKPESFRKEFGEQEVDLVNCRTNEIITGATVGDFWDGFEDVPNRLKNDKEKEPMVLKLKDWPPGEDFRDMMPSRFDDLMANIPLPEYTRRDGKLNLASRLPNYFVRPDLGPKMYNAYGLITPEDRKYGTTNLHLDVSDAANVMVYVGIPKGQCEQEEEVLRTIQDGDSDELTIKRFIEGKEKPGALWHIYAAKDTEKIREFLKKVSEEQGQDNPADHDPIHDQSWYLDRSLRKRLYQEYGVQGWAIVQFLGDVVFIPAGAPHQVHNLYSCIKVAEDFVSPEHVKHCFWLTQEFRYLSQTHTNHEDKLQVKNVIYHAVKDAVAMLKASESSLGKP</sequence>
<comment type="function">
    <text evidence="1 6 7">Histone demethylase that specifically demethylates 'Lys-9' of histone H3, thereby playing a central role in histone code. Preferentially demethylates mono- and dimethylated H3 'Lys-9' residue, with a preference for dimethylated residue, while it has weak or no activity on trimethylated H3 'Lys-9'. Demethylation of Lys residue generates formaldehyde and succinate. Involved in hormone-dependent transcriptional activation, by participating in recruitment to androgen-receptor target genes, resulting in H3 'Lys-9' demethylation and transcriptional activation (By similarity). Involved in spermatogenesis by regulating expression of target genes such as PRM1 and TNP1 which are required for packaging and condensation of sperm chromatin (PubMed:17943087). Involved in obesity resistance through regulation of metabolic genes such as PPARA and UCP1.</text>
</comment>
<comment type="catalytic activity">
    <reaction evidence="2">
        <text>N(6),N(6)-dimethyl-L-lysyl(9)-[histone H3] + 2 2-oxoglutarate + 2 O2 = L-lysyl(9)-[histone H3] + 2 formaldehyde + 2 succinate + 2 CO2</text>
        <dbReference type="Rhea" id="RHEA:60188"/>
        <dbReference type="Rhea" id="RHEA-COMP:15541"/>
        <dbReference type="Rhea" id="RHEA-COMP:15546"/>
        <dbReference type="ChEBI" id="CHEBI:15379"/>
        <dbReference type="ChEBI" id="CHEBI:16526"/>
        <dbReference type="ChEBI" id="CHEBI:16810"/>
        <dbReference type="ChEBI" id="CHEBI:16842"/>
        <dbReference type="ChEBI" id="CHEBI:29969"/>
        <dbReference type="ChEBI" id="CHEBI:30031"/>
        <dbReference type="ChEBI" id="CHEBI:61976"/>
        <dbReference type="EC" id="1.14.11.65"/>
    </reaction>
</comment>
<comment type="cofactor">
    <cofactor evidence="1">
        <name>Fe(2+)</name>
        <dbReference type="ChEBI" id="CHEBI:29033"/>
    </cofactor>
    <text evidence="1">Binds 1 Fe(2+) ion per subunit.</text>
</comment>
<comment type="subunit">
    <text evidence="2">Interacts with VRK1.</text>
</comment>
<comment type="subcellular location">
    <subcellularLocation>
        <location evidence="6">Cytoplasm</location>
    </subcellularLocation>
    <subcellularLocation>
        <location evidence="6">Nucleus</location>
    </subcellularLocation>
    <text>Nuclear in round spermatids. When spermatids start to elongate, localizes to the cytoplasm where it forms distinct foci which disappear in mature spermatozoa.</text>
</comment>
<comment type="alternative products">
    <event type="alternative splicing"/>
    <isoform>
        <id>Q6PCM1-1</id>
        <name>1</name>
        <sequence type="displayed"/>
    </isoform>
    <isoform>
        <id>Q6PCM1-2</id>
        <name>2</name>
        <sequence type="described" ref="VSP_018296 VSP_018297"/>
    </isoform>
</comment>
<comment type="tissue specificity">
    <text evidence="6">Highly expressed in testis (at protein level). Also expressed at high levels in tissues responsive to sympathetic nerve activity such as brown adipose tissue and skeletal muscle.</text>
</comment>
<comment type="developmental stage">
    <text evidence="6">Expression increases significantly during spermatogenesis with a 70-fold increase from day 7 testis to day 30 testis. First detected in the late pachytene stage, increases in diplotene and secondary spermatocytes and reaches its highest levels in round spermatids.</text>
</comment>
<comment type="induction">
    <text evidence="7">By beta-adrenergic stimulation (at protein level).</text>
</comment>
<comment type="domain">
    <text evidence="1">The JmjC domain and the C6-type zinc-finger are required for the demethylation activity.</text>
</comment>
<comment type="domain">
    <text evidence="1">Leu-Xaa-Xaa-Leu-Leu (LXXLL) motifs are known to mediate the association with nuclear receptors.</text>
</comment>
<comment type="disruption phenotype">
    <text evidence="7">Spermatogenesis defects and adult obesity.</text>
</comment>
<comment type="similarity">
    <text evidence="9">Belongs to the JHDM2 histone demethylase family.</text>
</comment>
<comment type="sequence caution" evidence="9">
    <conflict type="erroneous initiation">
        <sequence resource="EMBL-CDS" id="BAC98014"/>
    </conflict>
</comment>
<organism>
    <name type="scientific">Mus musculus</name>
    <name type="common">Mouse</name>
    <dbReference type="NCBI Taxonomy" id="10090"/>
    <lineage>
        <taxon>Eukaryota</taxon>
        <taxon>Metazoa</taxon>
        <taxon>Chordata</taxon>
        <taxon>Craniata</taxon>
        <taxon>Vertebrata</taxon>
        <taxon>Euteleostomi</taxon>
        <taxon>Mammalia</taxon>
        <taxon>Eutheria</taxon>
        <taxon>Euarchontoglires</taxon>
        <taxon>Glires</taxon>
        <taxon>Rodentia</taxon>
        <taxon>Myomorpha</taxon>
        <taxon>Muroidea</taxon>
        <taxon>Muridae</taxon>
        <taxon>Murinae</taxon>
        <taxon>Mus</taxon>
        <taxon>Mus</taxon>
    </lineage>
</organism>
<reference key="1">
    <citation type="journal article" date="2003" name="DNA Res.">
        <title>Prediction of the coding sequences of mouse homologues of KIAA gene: III. The complete nucleotide sequences of 500 mouse KIAA-homologous cDNAs identified by screening of terminal sequences of cDNA clones randomly sampled from size-fractionated libraries.</title>
        <authorList>
            <person name="Okazaki N."/>
            <person name="Kikuno R."/>
            <person name="Ohara R."/>
            <person name="Inamoto S."/>
            <person name="Koseki H."/>
            <person name="Hiraoka S."/>
            <person name="Saga Y."/>
            <person name="Nagase T."/>
            <person name="Ohara O."/>
            <person name="Koga H."/>
        </authorList>
    </citation>
    <scope>NUCLEOTIDE SEQUENCE [LARGE SCALE MRNA] (ISOFORM 1)</scope>
    <source>
        <tissue>Embryonic tail</tissue>
    </source>
</reference>
<reference key="2">
    <citation type="journal article" date="2004" name="Genome Res.">
        <title>The status, quality, and expansion of the NIH full-length cDNA project: the Mammalian Gene Collection (MGC).</title>
        <authorList>
            <consortium name="The MGC Project Team"/>
        </authorList>
    </citation>
    <scope>NUCLEOTIDE SEQUENCE [LARGE SCALE MRNA] (ISOFORM 1)</scope>
    <scope>NUCLEOTIDE SEQUENCE [LARGE SCALE MRNA] OF 1-1034 (ISOFORM 2)</scope>
    <source>
        <strain>C57BL/6J</strain>
        <strain>Czech II</strain>
        <strain>FVB/N</strain>
        <tissue>Brain</tissue>
        <tissue>Mammary tumor</tissue>
    </source>
</reference>
<reference key="3">
    <citation type="journal article" date="2005" name="Science">
        <title>The transcriptional landscape of the mammalian genome.</title>
        <authorList>
            <person name="Carninci P."/>
            <person name="Kasukawa T."/>
            <person name="Katayama S."/>
            <person name="Gough J."/>
            <person name="Frith M.C."/>
            <person name="Maeda N."/>
            <person name="Oyama R."/>
            <person name="Ravasi T."/>
            <person name="Lenhard B."/>
            <person name="Wells C."/>
            <person name="Kodzius R."/>
            <person name="Shimokawa K."/>
            <person name="Bajic V.B."/>
            <person name="Brenner S.E."/>
            <person name="Batalov S."/>
            <person name="Forrest A.R."/>
            <person name="Zavolan M."/>
            <person name="Davis M.J."/>
            <person name="Wilming L.G."/>
            <person name="Aidinis V."/>
            <person name="Allen J.E."/>
            <person name="Ambesi-Impiombato A."/>
            <person name="Apweiler R."/>
            <person name="Aturaliya R.N."/>
            <person name="Bailey T.L."/>
            <person name="Bansal M."/>
            <person name="Baxter L."/>
            <person name="Beisel K.W."/>
            <person name="Bersano T."/>
            <person name="Bono H."/>
            <person name="Chalk A.M."/>
            <person name="Chiu K.P."/>
            <person name="Choudhary V."/>
            <person name="Christoffels A."/>
            <person name="Clutterbuck D.R."/>
            <person name="Crowe M.L."/>
            <person name="Dalla E."/>
            <person name="Dalrymple B.P."/>
            <person name="de Bono B."/>
            <person name="Della Gatta G."/>
            <person name="di Bernardo D."/>
            <person name="Down T."/>
            <person name="Engstrom P."/>
            <person name="Fagiolini M."/>
            <person name="Faulkner G."/>
            <person name="Fletcher C.F."/>
            <person name="Fukushima T."/>
            <person name="Furuno M."/>
            <person name="Futaki S."/>
            <person name="Gariboldi M."/>
            <person name="Georgii-Hemming P."/>
            <person name="Gingeras T.R."/>
            <person name="Gojobori T."/>
            <person name="Green R.E."/>
            <person name="Gustincich S."/>
            <person name="Harbers M."/>
            <person name="Hayashi Y."/>
            <person name="Hensch T.K."/>
            <person name="Hirokawa N."/>
            <person name="Hill D."/>
            <person name="Huminiecki L."/>
            <person name="Iacono M."/>
            <person name="Ikeo K."/>
            <person name="Iwama A."/>
            <person name="Ishikawa T."/>
            <person name="Jakt M."/>
            <person name="Kanapin A."/>
            <person name="Katoh M."/>
            <person name="Kawasawa Y."/>
            <person name="Kelso J."/>
            <person name="Kitamura H."/>
            <person name="Kitano H."/>
            <person name="Kollias G."/>
            <person name="Krishnan S.P."/>
            <person name="Kruger A."/>
            <person name="Kummerfeld S.K."/>
            <person name="Kurochkin I.V."/>
            <person name="Lareau L.F."/>
            <person name="Lazarevic D."/>
            <person name="Lipovich L."/>
            <person name="Liu J."/>
            <person name="Liuni S."/>
            <person name="McWilliam S."/>
            <person name="Madan Babu M."/>
            <person name="Madera M."/>
            <person name="Marchionni L."/>
            <person name="Matsuda H."/>
            <person name="Matsuzawa S."/>
            <person name="Miki H."/>
            <person name="Mignone F."/>
            <person name="Miyake S."/>
            <person name="Morris K."/>
            <person name="Mottagui-Tabar S."/>
            <person name="Mulder N."/>
            <person name="Nakano N."/>
            <person name="Nakauchi H."/>
            <person name="Ng P."/>
            <person name="Nilsson R."/>
            <person name="Nishiguchi S."/>
            <person name="Nishikawa S."/>
            <person name="Nori F."/>
            <person name="Ohara O."/>
            <person name="Okazaki Y."/>
            <person name="Orlando V."/>
            <person name="Pang K.C."/>
            <person name="Pavan W.J."/>
            <person name="Pavesi G."/>
            <person name="Pesole G."/>
            <person name="Petrovsky N."/>
            <person name="Piazza S."/>
            <person name="Reed J."/>
            <person name="Reid J.F."/>
            <person name="Ring B.Z."/>
            <person name="Ringwald M."/>
            <person name="Rost B."/>
            <person name="Ruan Y."/>
            <person name="Salzberg S.L."/>
            <person name="Sandelin A."/>
            <person name="Schneider C."/>
            <person name="Schoenbach C."/>
            <person name="Sekiguchi K."/>
            <person name="Semple C.A."/>
            <person name="Seno S."/>
            <person name="Sessa L."/>
            <person name="Sheng Y."/>
            <person name="Shibata Y."/>
            <person name="Shimada H."/>
            <person name="Shimada K."/>
            <person name="Silva D."/>
            <person name="Sinclair B."/>
            <person name="Sperling S."/>
            <person name="Stupka E."/>
            <person name="Sugiura K."/>
            <person name="Sultana R."/>
            <person name="Takenaka Y."/>
            <person name="Taki K."/>
            <person name="Tammoja K."/>
            <person name="Tan S.L."/>
            <person name="Tang S."/>
            <person name="Taylor M.S."/>
            <person name="Tegner J."/>
            <person name="Teichmann S.A."/>
            <person name="Ueda H.R."/>
            <person name="van Nimwegen E."/>
            <person name="Verardo R."/>
            <person name="Wei C.L."/>
            <person name="Yagi K."/>
            <person name="Yamanishi H."/>
            <person name="Zabarovsky E."/>
            <person name="Zhu S."/>
            <person name="Zimmer A."/>
            <person name="Hide W."/>
            <person name="Bult C."/>
            <person name="Grimmond S.M."/>
            <person name="Teasdale R.D."/>
            <person name="Liu E.T."/>
            <person name="Brusic V."/>
            <person name="Quackenbush J."/>
            <person name="Wahlestedt C."/>
            <person name="Mattick J.S."/>
            <person name="Hume D.A."/>
            <person name="Kai C."/>
            <person name="Sasaki D."/>
            <person name="Tomaru Y."/>
            <person name="Fukuda S."/>
            <person name="Kanamori-Katayama M."/>
            <person name="Suzuki M."/>
            <person name="Aoki J."/>
            <person name="Arakawa T."/>
            <person name="Iida J."/>
            <person name="Imamura K."/>
            <person name="Itoh M."/>
            <person name="Kato T."/>
            <person name="Kawaji H."/>
            <person name="Kawagashira N."/>
            <person name="Kawashima T."/>
            <person name="Kojima M."/>
            <person name="Kondo S."/>
            <person name="Konno H."/>
            <person name="Nakano K."/>
            <person name="Ninomiya N."/>
            <person name="Nishio T."/>
            <person name="Okada M."/>
            <person name="Plessy C."/>
            <person name="Shibata K."/>
            <person name="Shiraki T."/>
            <person name="Suzuki S."/>
            <person name="Tagami M."/>
            <person name="Waki K."/>
            <person name="Watahiki A."/>
            <person name="Okamura-Oho Y."/>
            <person name="Suzuki H."/>
            <person name="Kawai J."/>
            <person name="Hayashizaki Y."/>
        </authorList>
    </citation>
    <scope>NUCLEOTIDE SEQUENCE [LARGE SCALE MRNA] OF 1-834</scope>
    <source>
        <tissue>Lung</tissue>
    </source>
</reference>
<reference key="4">
    <citation type="submission" date="2005-12" db="EMBL/GenBank/DDBJ databases">
        <title>Characterization of murine Jmjd1a/TSGA.</title>
        <authorList>
            <person name="Knebel J."/>
            <person name="De Haro L."/>
            <person name="Janknecht R."/>
        </authorList>
    </citation>
    <scope>NUCLEOTIDE SEQUENCE [MRNA] OF 115-1323</scope>
    <source>
        <strain>BALB/cJ</strain>
        <tissue>Testis</tissue>
    </source>
</reference>
<reference key="5">
    <citation type="journal article" date="2007" name="Nature">
        <title>Histone demethylase JHDM2A is critical for Tnp1 and Prm1 transcription and spermatogenesis.</title>
        <authorList>
            <person name="Okada Y."/>
            <person name="Scott G."/>
            <person name="Ray M.K."/>
            <person name="Mishina Y."/>
            <person name="Zhang Y."/>
        </authorList>
    </citation>
    <scope>FUNCTION</scope>
    <scope>SUBCELLULAR LOCATION</scope>
    <scope>TISSUE SPECIFICITY</scope>
    <scope>DEVELOPMENTAL STAGE</scope>
</reference>
<reference key="6">
    <citation type="journal article" date="2009" name="Nature">
        <title>Role of Jhdm2a in regulating metabolic gene expression and obesity resistance.</title>
        <authorList>
            <person name="Tateishi K."/>
            <person name="Okada Y."/>
            <person name="Kallin E.M."/>
            <person name="Zhang Y."/>
        </authorList>
    </citation>
    <scope>FUNCTION</scope>
    <scope>INDUCTION</scope>
    <scope>DISRUPTION PHENOTYPE</scope>
</reference>
<reference key="7">
    <citation type="journal article" date="2010" name="Cell">
        <title>A tissue-specific atlas of mouse protein phosphorylation and expression.</title>
        <authorList>
            <person name="Huttlin E.L."/>
            <person name="Jedrychowski M.P."/>
            <person name="Elias J.E."/>
            <person name="Goswami T."/>
            <person name="Rad R."/>
            <person name="Beausoleil S.A."/>
            <person name="Villen J."/>
            <person name="Haas W."/>
            <person name="Sowa M.E."/>
            <person name="Gygi S.P."/>
        </authorList>
    </citation>
    <scope>IDENTIFICATION BY MASS SPECTROMETRY [LARGE SCALE ANALYSIS]</scope>
    <source>
        <tissue>Testis</tissue>
    </source>
</reference>
<keyword id="KW-0007">Acetylation</keyword>
<keyword id="KW-0010">Activator</keyword>
<keyword id="KW-0025">Alternative splicing</keyword>
<keyword id="KW-0156">Chromatin regulator</keyword>
<keyword id="KW-0963">Cytoplasm</keyword>
<keyword id="KW-0221">Differentiation</keyword>
<keyword id="KW-0223">Dioxygenase</keyword>
<keyword id="KW-0408">Iron</keyword>
<keyword id="KW-0479">Metal-binding</keyword>
<keyword id="KW-0539">Nucleus</keyword>
<keyword id="KW-0560">Oxidoreductase</keyword>
<keyword id="KW-0597">Phosphoprotein</keyword>
<keyword id="KW-1185">Reference proteome</keyword>
<keyword id="KW-0744">Spermatogenesis</keyword>
<keyword id="KW-0804">Transcription</keyword>
<keyword id="KW-0805">Transcription regulation</keyword>
<keyword id="KW-0862">Zinc</keyword>
<keyword id="KW-0863">Zinc-finger</keyword>
<proteinExistence type="evidence at protein level"/>
<accession>Q6PCM1</accession>
<accession>Q2MJQ6</accession>
<accession>Q3TKW8</accession>
<accession>Q3UML3</accession>
<accession>Q6ZQ57</accession>
<accession>Q8K2J6</accession>
<accession>Q8K2K4</accession>
<accession>Q8R350</accession>